<reference key="1">
    <citation type="journal article" date="1988" name="Nucleic Acids Res.">
        <title>A plastid fragment from the psbE-psbF coding region in the mitochondrial genome of Oenothera berteriana.</title>
        <authorList>
            <person name="Schuster W."/>
            <person name="Brennicke A."/>
        </authorList>
    </citation>
    <scope>NUCLEOTIDE SEQUENCE [GENOMIC DNA]</scope>
</reference>
<sequence length="83" mass="9314">MSGSTGGRSFADIITSIRYWVIHSITIPSLFIAGWLFVSTGLAYDVFGSPRPNEYFTESRQGIPLITGRFDSLEQLDEFSRSF</sequence>
<feature type="chain" id="PRO_0000200324" description="Cytochrome b559 subunit alpha">
    <location>
        <begin position="1"/>
        <end position="83"/>
    </location>
</feature>
<feature type="transmembrane region" description="Helical" evidence="1">
    <location>
        <begin position="21"/>
        <end position="35"/>
    </location>
</feature>
<feature type="binding site" description="axial binding residue" evidence="1">
    <location>
        <position position="23"/>
    </location>
    <ligand>
        <name>heme</name>
        <dbReference type="ChEBI" id="CHEBI:30413"/>
        <note>ligand shared with beta subunit</note>
    </ligand>
    <ligandPart>
        <name>Fe</name>
        <dbReference type="ChEBI" id="CHEBI:18248"/>
    </ligandPart>
</feature>
<organism>
    <name type="scientific">Oenothera berteroana</name>
    <name type="common">Bertero's evening primrose</name>
    <dbReference type="NCBI Taxonomy" id="3950"/>
    <lineage>
        <taxon>Eukaryota</taxon>
        <taxon>Viridiplantae</taxon>
        <taxon>Streptophyta</taxon>
        <taxon>Embryophyta</taxon>
        <taxon>Tracheophyta</taxon>
        <taxon>Spermatophyta</taxon>
        <taxon>Magnoliopsida</taxon>
        <taxon>eudicotyledons</taxon>
        <taxon>Gunneridae</taxon>
        <taxon>Pentapetalae</taxon>
        <taxon>rosids</taxon>
        <taxon>malvids</taxon>
        <taxon>Myrtales</taxon>
        <taxon>Onagraceae</taxon>
        <taxon>Onagroideae</taxon>
        <taxon>Onagreae</taxon>
        <taxon>Oenothera</taxon>
    </lineage>
</organism>
<gene>
    <name evidence="1" type="primary">psbE</name>
</gene>
<proteinExistence type="inferred from homology"/>
<accession>P05170</accession>
<keyword id="KW-0150">Chloroplast</keyword>
<keyword id="KW-0249">Electron transport</keyword>
<keyword id="KW-0349">Heme</keyword>
<keyword id="KW-0408">Iron</keyword>
<keyword id="KW-0472">Membrane</keyword>
<keyword id="KW-0479">Metal-binding</keyword>
<keyword id="KW-0602">Photosynthesis</keyword>
<keyword id="KW-0604">Photosystem II</keyword>
<keyword id="KW-0934">Plastid</keyword>
<keyword id="KW-0793">Thylakoid</keyword>
<keyword id="KW-0812">Transmembrane</keyword>
<keyword id="KW-1133">Transmembrane helix</keyword>
<keyword id="KW-0813">Transport</keyword>
<geneLocation type="chloroplast"/>
<comment type="function">
    <text evidence="1">This b-type cytochrome is tightly associated with the reaction center of photosystem II (PSII). PSII is a light-driven water:plastoquinone oxidoreductase that uses light energy to abstract electrons from H(2)O, generating O(2) and a proton gradient subsequently used for ATP formation. It consists of a core antenna complex that captures photons, and an electron transfer chain that converts photonic excitation into a charge separation.</text>
</comment>
<comment type="cofactor">
    <cofactor evidence="1">
        <name>heme b</name>
        <dbReference type="ChEBI" id="CHEBI:60344"/>
    </cofactor>
    <text evidence="1">With its partner (PsbF) binds heme. PSII binds additional chlorophylls, carotenoids and specific lipids.</text>
</comment>
<comment type="subunit">
    <text evidence="1">Heterodimer of an alpha subunit and a beta subunit. PSII is composed of 1 copy each of membrane proteins PsbA, PsbB, PsbC, PsbD, PsbE, PsbF, PsbH, PsbI, PsbJ, PsbK, PsbL, PsbM, PsbT, PsbX, PsbY, PsbZ, Psb30/Ycf12, at least 3 peripheral proteins of the oxygen-evolving complex and a large number of cofactors. It forms dimeric complexes.</text>
</comment>
<comment type="subcellular location">
    <subcellularLocation>
        <location evidence="1">Plastid</location>
        <location evidence="1">Chloroplast thylakoid membrane</location>
        <topology evidence="1">Single-pass membrane protein</topology>
    </subcellularLocation>
</comment>
<comment type="similarity">
    <text evidence="1">Belongs to the PsbE/PsbF family.</text>
</comment>
<name>PSBE_OENBE</name>
<dbReference type="EMBL" id="X07951">
    <property type="protein sequence ID" value="CAA30776.1"/>
    <property type="molecule type" value="Genomic_DNA"/>
</dbReference>
<dbReference type="SMR" id="P05170"/>
<dbReference type="GO" id="GO:0009535">
    <property type="term" value="C:chloroplast thylakoid membrane"/>
    <property type="evidence" value="ECO:0007669"/>
    <property type="project" value="UniProtKB-SubCell"/>
</dbReference>
<dbReference type="GO" id="GO:0009539">
    <property type="term" value="C:photosystem II reaction center"/>
    <property type="evidence" value="ECO:0007669"/>
    <property type="project" value="InterPro"/>
</dbReference>
<dbReference type="GO" id="GO:0009055">
    <property type="term" value="F:electron transfer activity"/>
    <property type="evidence" value="ECO:0007669"/>
    <property type="project" value="UniProtKB-UniRule"/>
</dbReference>
<dbReference type="GO" id="GO:0020037">
    <property type="term" value="F:heme binding"/>
    <property type="evidence" value="ECO:0007669"/>
    <property type="project" value="InterPro"/>
</dbReference>
<dbReference type="GO" id="GO:0005506">
    <property type="term" value="F:iron ion binding"/>
    <property type="evidence" value="ECO:0007669"/>
    <property type="project" value="UniProtKB-UniRule"/>
</dbReference>
<dbReference type="GO" id="GO:0009767">
    <property type="term" value="P:photosynthetic electron transport chain"/>
    <property type="evidence" value="ECO:0007669"/>
    <property type="project" value="InterPro"/>
</dbReference>
<dbReference type="Gene3D" id="1.20.5.860">
    <property type="entry name" value="Photosystem II cytochrome b559, alpha subunit"/>
    <property type="match status" value="1"/>
</dbReference>
<dbReference type="HAMAP" id="MF_00642">
    <property type="entry name" value="PSII_PsbE"/>
    <property type="match status" value="1"/>
</dbReference>
<dbReference type="InterPro" id="IPR006217">
    <property type="entry name" value="PSII_cyt_b559_asu"/>
</dbReference>
<dbReference type="InterPro" id="IPR037025">
    <property type="entry name" value="PSII_cyt_b559_asu_sf"/>
</dbReference>
<dbReference type="InterPro" id="IPR006216">
    <property type="entry name" value="PSII_cyt_b559_CS"/>
</dbReference>
<dbReference type="InterPro" id="IPR013081">
    <property type="entry name" value="PSII_cyt_b559_N"/>
</dbReference>
<dbReference type="InterPro" id="IPR013082">
    <property type="entry name" value="PSII_cytb559_asu_lum"/>
</dbReference>
<dbReference type="NCBIfam" id="TIGR01332">
    <property type="entry name" value="cyt_b559_alpha"/>
    <property type="match status" value="1"/>
</dbReference>
<dbReference type="PANTHER" id="PTHR33391">
    <property type="entry name" value="CYTOCHROME B559 SUBUNIT BETA-RELATED"/>
    <property type="match status" value="1"/>
</dbReference>
<dbReference type="PANTHER" id="PTHR33391:SF9">
    <property type="entry name" value="CYTOCHROME B559 SUBUNIT BETA-RELATED"/>
    <property type="match status" value="1"/>
</dbReference>
<dbReference type="Pfam" id="PF00283">
    <property type="entry name" value="Cytochrom_B559"/>
    <property type="match status" value="1"/>
</dbReference>
<dbReference type="Pfam" id="PF00284">
    <property type="entry name" value="Cytochrom_B559a"/>
    <property type="match status" value="1"/>
</dbReference>
<dbReference type="PIRSF" id="PIRSF000036">
    <property type="entry name" value="PsbE"/>
    <property type="match status" value="1"/>
</dbReference>
<dbReference type="SUPFAM" id="SSF161045">
    <property type="entry name" value="Cytochrome b559 subunits"/>
    <property type="match status" value="1"/>
</dbReference>
<dbReference type="PROSITE" id="PS00537">
    <property type="entry name" value="CYTOCHROME_B559"/>
    <property type="match status" value="1"/>
</dbReference>
<evidence type="ECO:0000255" key="1">
    <source>
        <dbReference type="HAMAP-Rule" id="MF_00642"/>
    </source>
</evidence>
<protein>
    <recommendedName>
        <fullName evidence="1">Cytochrome b559 subunit alpha</fullName>
    </recommendedName>
    <alternativeName>
        <fullName evidence="1">PSII reaction center subunit V</fullName>
    </alternativeName>
</protein>